<feature type="chain" id="PRO_0000298537" description="NADH-quinone oxidoreductase subunit I">
    <location>
        <begin position="1"/>
        <end position="182"/>
    </location>
</feature>
<feature type="domain" description="4Fe-4S ferredoxin-type 1" evidence="1">
    <location>
        <begin position="52"/>
        <end position="82"/>
    </location>
</feature>
<feature type="domain" description="4Fe-4S ferredoxin-type 2" evidence="1">
    <location>
        <begin position="92"/>
        <end position="121"/>
    </location>
</feature>
<feature type="binding site" evidence="1">
    <location>
        <position position="62"/>
    </location>
    <ligand>
        <name>[4Fe-4S] cluster</name>
        <dbReference type="ChEBI" id="CHEBI:49883"/>
        <label>1</label>
    </ligand>
</feature>
<feature type="binding site" evidence="1">
    <location>
        <position position="65"/>
    </location>
    <ligand>
        <name>[4Fe-4S] cluster</name>
        <dbReference type="ChEBI" id="CHEBI:49883"/>
        <label>1</label>
    </ligand>
</feature>
<feature type="binding site" evidence="1">
    <location>
        <position position="68"/>
    </location>
    <ligand>
        <name>[4Fe-4S] cluster</name>
        <dbReference type="ChEBI" id="CHEBI:49883"/>
        <label>1</label>
    </ligand>
</feature>
<feature type="binding site" evidence="1">
    <location>
        <position position="72"/>
    </location>
    <ligand>
        <name>[4Fe-4S] cluster</name>
        <dbReference type="ChEBI" id="CHEBI:49883"/>
        <label>2</label>
    </ligand>
</feature>
<feature type="binding site" evidence="1">
    <location>
        <position position="101"/>
    </location>
    <ligand>
        <name>[4Fe-4S] cluster</name>
        <dbReference type="ChEBI" id="CHEBI:49883"/>
        <label>2</label>
    </ligand>
</feature>
<feature type="binding site" evidence="1">
    <location>
        <position position="104"/>
    </location>
    <ligand>
        <name>[4Fe-4S] cluster</name>
        <dbReference type="ChEBI" id="CHEBI:49883"/>
        <label>2</label>
    </ligand>
</feature>
<feature type="binding site" evidence="1">
    <location>
        <position position="107"/>
    </location>
    <ligand>
        <name>[4Fe-4S] cluster</name>
        <dbReference type="ChEBI" id="CHEBI:49883"/>
        <label>2</label>
    </ligand>
</feature>
<feature type="binding site" evidence="1">
    <location>
        <position position="111"/>
    </location>
    <ligand>
        <name>[4Fe-4S] cluster</name>
        <dbReference type="ChEBI" id="CHEBI:49883"/>
        <label>1</label>
    </ligand>
</feature>
<name>NUOI_PSEE4</name>
<evidence type="ECO:0000255" key="1">
    <source>
        <dbReference type="HAMAP-Rule" id="MF_01351"/>
    </source>
</evidence>
<keyword id="KW-0004">4Fe-4S</keyword>
<keyword id="KW-0997">Cell inner membrane</keyword>
<keyword id="KW-1003">Cell membrane</keyword>
<keyword id="KW-0408">Iron</keyword>
<keyword id="KW-0411">Iron-sulfur</keyword>
<keyword id="KW-0472">Membrane</keyword>
<keyword id="KW-0479">Metal-binding</keyword>
<keyword id="KW-0520">NAD</keyword>
<keyword id="KW-0874">Quinone</keyword>
<keyword id="KW-0677">Repeat</keyword>
<keyword id="KW-1278">Translocase</keyword>
<keyword id="KW-0830">Ubiquinone</keyword>
<accession>Q1I7Z3</accession>
<protein>
    <recommendedName>
        <fullName evidence="1">NADH-quinone oxidoreductase subunit I</fullName>
        <ecNumber evidence="1">7.1.1.-</ecNumber>
    </recommendedName>
    <alternativeName>
        <fullName evidence="1">NADH dehydrogenase I subunit I</fullName>
    </alternativeName>
    <alternativeName>
        <fullName evidence="1">NDH-1 subunit I</fullName>
    </alternativeName>
</protein>
<proteinExistence type="inferred from homology"/>
<gene>
    <name evidence="1" type="primary">nuoI</name>
    <name type="ordered locus">PSEEN3491</name>
</gene>
<dbReference type="EC" id="7.1.1.-" evidence="1"/>
<dbReference type="EMBL" id="CT573326">
    <property type="protein sequence ID" value="CAK16235.1"/>
    <property type="molecule type" value="Genomic_DNA"/>
</dbReference>
<dbReference type="RefSeq" id="WP_011534620.1">
    <property type="nucleotide sequence ID" value="NC_008027.1"/>
</dbReference>
<dbReference type="SMR" id="Q1I7Z3"/>
<dbReference type="STRING" id="384676.PSEEN3491"/>
<dbReference type="GeneID" id="90537790"/>
<dbReference type="KEGG" id="pen:PSEEN3491"/>
<dbReference type="eggNOG" id="COG1143">
    <property type="taxonomic scope" value="Bacteria"/>
</dbReference>
<dbReference type="HOGENOM" id="CLU_067218_4_3_6"/>
<dbReference type="OrthoDB" id="9808559at2"/>
<dbReference type="Proteomes" id="UP000000658">
    <property type="component" value="Chromosome"/>
</dbReference>
<dbReference type="GO" id="GO:0005886">
    <property type="term" value="C:plasma membrane"/>
    <property type="evidence" value="ECO:0007669"/>
    <property type="project" value="UniProtKB-SubCell"/>
</dbReference>
<dbReference type="GO" id="GO:0051539">
    <property type="term" value="F:4 iron, 4 sulfur cluster binding"/>
    <property type="evidence" value="ECO:0007669"/>
    <property type="project" value="UniProtKB-KW"/>
</dbReference>
<dbReference type="GO" id="GO:0005506">
    <property type="term" value="F:iron ion binding"/>
    <property type="evidence" value="ECO:0007669"/>
    <property type="project" value="UniProtKB-UniRule"/>
</dbReference>
<dbReference type="GO" id="GO:0050136">
    <property type="term" value="F:NADH:ubiquinone reductase (non-electrogenic) activity"/>
    <property type="evidence" value="ECO:0007669"/>
    <property type="project" value="UniProtKB-UniRule"/>
</dbReference>
<dbReference type="GO" id="GO:0048038">
    <property type="term" value="F:quinone binding"/>
    <property type="evidence" value="ECO:0007669"/>
    <property type="project" value="UniProtKB-KW"/>
</dbReference>
<dbReference type="GO" id="GO:0009060">
    <property type="term" value="P:aerobic respiration"/>
    <property type="evidence" value="ECO:0007669"/>
    <property type="project" value="TreeGrafter"/>
</dbReference>
<dbReference type="FunFam" id="3.30.70.3270:FF:000002">
    <property type="entry name" value="NADH-quinone oxidoreductase subunit I"/>
    <property type="match status" value="1"/>
</dbReference>
<dbReference type="Gene3D" id="3.30.70.3270">
    <property type="match status" value="1"/>
</dbReference>
<dbReference type="HAMAP" id="MF_01351">
    <property type="entry name" value="NDH1_NuoI"/>
    <property type="match status" value="1"/>
</dbReference>
<dbReference type="InterPro" id="IPR017896">
    <property type="entry name" value="4Fe4S_Fe-S-bd"/>
</dbReference>
<dbReference type="InterPro" id="IPR017900">
    <property type="entry name" value="4Fe4S_Fe_S_CS"/>
</dbReference>
<dbReference type="InterPro" id="IPR010226">
    <property type="entry name" value="NADH_quinone_OxRdtase_chainI"/>
</dbReference>
<dbReference type="NCBIfam" id="TIGR01971">
    <property type="entry name" value="NuoI"/>
    <property type="match status" value="1"/>
</dbReference>
<dbReference type="NCBIfam" id="NF004536">
    <property type="entry name" value="PRK05888.1-1"/>
    <property type="match status" value="1"/>
</dbReference>
<dbReference type="PANTHER" id="PTHR10849:SF20">
    <property type="entry name" value="NADH DEHYDROGENASE [UBIQUINONE] IRON-SULFUR PROTEIN 8, MITOCHONDRIAL"/>
    <property type="match status" value="1"/>
</dbReference>
<dbReference type="PANTHER" id="PTHR10849">
    <property type="entry name" value="NADH DEHYDROGENASE UBIQUINONE IRON-SULFUR PROTEIN 8, MITOCHONDRIAL"/>
    <property type="match status" value="1"/>
</dbReference>
<dbReference type="Pfam" id="PF12838">
    <property type="entry name" value="Fer4_7"/>
    <property type="match status" value="1"/>
</dbReference>
<dbReference type="SUPFAM" id="SSF54862">
    <property type="entry name" value="4Fe-4S ferredoxins"/>
    <property type="match status" value="1"/>
</dbReference>
<dbReference type="PROSITE" id="PS00198">
    <property type="entry name" value="4FE4S_FER_1"/>
    <property type="match status" value="2"/>
</dbReference>
<dbReference type="PROSITE" id="PS51379">
    <property type="entry name" value="4FE4S_FER_2"/>
    <property type="match status" value="2"/>
</dbReference>
<comment type="function">
    <text evidence="1">NDH-1 shuttles electrons from NADH, via FMN and iron-sulfur (Fe-S) centers, to quinones in the respiratory chain. The immediate electron acceptor for the enzyme in this species is believed to be ubiquinone. Couples the redox reaction to proton translocation (for every two electrons transferred, four hydrogen ions are translocated across the cytoplasmic membrane), and thus conserves the redox energy in a proton gradient.</text>
</comment>
<comment type="catalytic activity">
    <reaction evidence="1">
        <text>a quinone + NADH + 5 H(+)(in) = a quinol + NAD(+) + 4 H(+)(out)</text>
        <dbReference type="Rhea" id="RHEA:57888"/>
        <dbReference type="ChEBI" id="CHEBI:15378"/>
        <dbReference type="ChEBI" id="CHEBI:24646"/>
        <dbReference type="ChEBI" id="CHEBI:57540"/>
        <dbReference type="ChEBI" id="CHEBI:57945"/>
        <dbReference type="ChEBI" id="CHEBI:132124"/>
    </reaction>
</comment>
<comment type="cofactor">
    <cofactor evidence="1">
        <name>[4Fe-4S] cluster</name>
        <dbReference type="ChEBI" id="CHEBI:49883"/>
    </cofactor>
    <text evidence="1">Binds 2 [4Fe-4S] clusters per subunit.</text>
</comment>
<comment type="subunit">
    <text evidence="1">NDH-1 is composed of 13 different subunits. Subunits NuoA, H, J, K, L, M, N constitute the membrane sector of the complex.</text>
</comment>
<comment type="subcellular location">
    <subcellularLocation>
        <location evidence="1">Cell inner membrane</location>
        <topology evidence="1">Peripheral membrane protein</topology>
    </subcellularLocation>
</comment>
<comment type="similarity">
    <text evidence="1">Belongs to the complex I 23 kDa subunit family.</text>
</comment>
<sequence length="182" mass="20546">MFKYIGDIVKGTGTQLRSLVMVFSHGFRKRDTLQYPEEPVYLPPRYRGRIVLTRDPDGEERCVACNLCAVACPVGCISLQKAETEDGRWYPEFFRINFSRCIFCGLCEEACPTTAIQLTPDFEMAEFKRQDLVYEKEDLLISGPGKNPDYNFYRVAGMAIAGKPKGSAQNEAEPINVKSLLP</sequence>
<organism>
    <name type="scientific">Pseudomonas entomophila (strain L48)</name>
    <dbReference type="NCBI Taxonomy" id="384676"/>
    <lineage>
        <taxon>Bacteria</taxon>
        <taxon>Pseudomonadati</taxon>
        <taxon>Pseudomonadota</taxon>
        <taxon>Gammaproteobacteria</taxon>
        <taxon>Pseudomonadales</taxon>
        <taxon>Pseudomonadaceae</taxon>
        <taxon>Pseudomonas</taxon>
    </lineage>
</organism>
<reference key="1">
    <citation type="journal article" date="2006" name="Nat. Biotechnol.">
        <title>Complete genome sequence of the entomopathogenic and metabolically versatile soil bacterium Pseudomonas entomophila.</title>
        <authorList>
            <person name="Vodovar N."/>
            <person name="Vallenet D."/>
            <person name="Cruveiller S."/>
            <person name="Rouy Z."/>
            <person name="Barbe V."/>
            <person name="Acosta C."/>
            <person name="Cattolico L."/>
            <person name="Jubin C."/>
            <person name="Lajus A."/>
            <person name="Segurens B."/>
            <person name="Vacherie B."/>
            <person name="Wincker P."/>
            <person name="Weissenbach J."/>
            <person name="Lemaitre B."/>
            <person name="Medigue C."/>
            <person name="Boccard F."/>
        </authorList>
    </citation>
    <scope>NUCLEOTIDE SEQUENCE [LARGE SCALE GENOMIC DNA]</scope>
    <source>
        <strain>L48</strain>
    </source>
</reference>